<accession>A3N0Q9</accession>
<reference key="1">
    <citation type="journal article" date="2008" name="J. Bacteriol.">
        <title>The complete genome sequence of Actinobacillus pleuropneumoniae L20 (serotype 5b).</title>
        <authorList>
            <person name="Foote S.J."/>
            <person name="Bosse J.T."/>
            <person name="Bouevitch A.B."/>
            <person name="Langford P.R."/>
            <person name="Young N.M."/>
            <person name="Nash J.H.E."/>
        </authorList>
    </citation>
    <scope>NUCLEOTIDE SEQUENCE [LARGE SCALE GENOMIC DNA]</scope>
    <source>
        <strain>L20</strain>
    </source>
</reference>
<organism>
    <name type="scientific">Actinobacillus pleuropneumoniae serotype 5b (strain L20)</name>
    <dbReference type="NCBI Taxonomy" id="416269"/>
    <lineage>
        <taxon>Bacteria</taxon>
        <taxon>Pseudomonadati</taxon>
        <taxon>Pseudomonadota</taxon>
        <taxon>Gammaproteobacteria</taxon>
        <taxon>Pasteurellales</taxon>
        <taxon>Pasteurellaceae</taxon>
        <taxon>Actinobacillus</taxon>
    </lineage>
</organism>
<protein>
    <recommendedName>
        <fullName evidence="1">4-hydroxy-tetrahydrodipicolinate synthase</fullName>
        <shortName evidence="1">HTPA synthase</shortName>
        <ecNumber evidence="1">4.3.3.7</ecNumber>
    </recommendedName>
</protein>
<comment type="function">
    <text evidence="1">Catalyzes the condensation of (S)-aspartate-beta-semialdehyde [(S)-ASA] and pyruvate to 4-hydroxy-tetrahydrodipicolinate (HTPA).</text>
</comment>
<comment type="catalytic activity">
    <reaction evidence="1">
        <text>L-aspartate 4-semialdehyde + pyruvate = (2S,4S)-4-hydroxy-2,3,4,5-tetrahydrodipicolinate + H2O + H(+)</text>
        <dbReference type="Rhea" id="RHEA:34171"/>
        <dbReference type="ChEBI" id="CHEBI:15361"/>
        <dbReference type="ChEBI" id="CHEBI:15377"/>
        <dbReference type="ChEBI" id="CHEBI:15378"/>
        <dbReference type="ChEBI" id="CHEBI:67139"/>
        <dbReference type="ChEBI" id="CHEBI:537519"/>
        <dbReference type="EC" id="4.3.3.7"/>
    </reaction>
</comment>
<comment type="pathway">
    <text evidence="1">Amino-acid biosynthesis; L-lysine biosynthesis via DAP pathway; (S)-tetrahydrodipicolinate from L-aspartate: step 3/4.</text>
</comment>
<comment type="subunit">
    <text evidence="1">Homotetramer; dimer of dimers.</text>
</comment>
<comment type="subcellular location">
    <subcellularLocation>
        <location evidence="1">Cytoplasm</location>
    </subcellularLocation>
</comment>
<comment type="similarity">
    <text evidence="1">Belongs to the DapA family.</text>
</comment>
<comment type="caution">
    <text evidence="2">Was originally thought to be a dihydrodipicolinate synthase (DHDPS), catalyzing the condensation of (S)-aspartate-beta-semialdehyde [(S)-ASA] and pyruvate to dihydrodipicolinate (DHDP). However, it was shown in E.coli that the product of the enzymatic reaction is not dihydrodipicolinate but in fact (4S)-4-hydroxy-2,3,4,5-tetrahydro-(2S)-dipicolinic acid (HTPA), and that the consecutive dehydration reaction leading to DHDP is not spontaneous but catalyzed by DapB.</text>
</comment>
<feature type="chain" id="PRO_0000340933" description="4-hydroxy-tetrahydrodipicolinate synthase">
    <location>
        <begin position="1"/>
        <end position="295"/>
    </location>
</feature>
<feature type="active site" description="Proton donor/acceptor" evidence="1">
    <location>
        <position position="136"/>
    </location>
</feature>
<feature type="active site" description="Schiff-base intermediate with substrate" evidence="1">
    <location>
        <position position="164"/>
    </location>
</feature>
<feature type="binding site" evidence="1">
    <location>
        <position position="48"/>
    </location>
    <ligand>
        <name>pyruvate</name>
        <dbReference type="ChEBI" id="CHEBI:15361"/>
    </ligand>
</feature>
<feature type="binding site" evidence="1">
    <location>
        <position position="206"/>
    </location>
    <ligand>
        <name>pyruvate</name>
        <dbReference type="ChEBI" id="CHEBI:15361"/>
    </ligand>
</feature>
<feature type="site" description="Part of a proton relay during catalysis" evidence="1">
    <location>
        <position position="47"/>
    </location>
</feature>
<feature type="site" description="Part of a proton relay during catalysis" evidence="1">
    <location>
        <position position="110"/>
    </location>
</feature>
<keyword id="KW-0028">Amino-acid biosynthesis</keyword>
<keyword id="KW-0963">Cytoplasm</keyword>
<keyword id="KW-0220">Diaminopimelate biosynthesis</keyword>
<keyword id="KW-0456">Lyase</keyword>
<keyword id="KW-0457">Lysine biosynthesis</keyword>
<keyword id="KW-1185">Reference proteome</keyword>
<keyword id="KW-0704">Schiff base</keyword>
<evidence type="ECO:0000255" key="1">
    <source>
        <dbReference type="HAMAP-Rule" id="MF_00418"/>
    </source>
</evidence>
<evidence type="ECO:0000305" key="2"/>
<dbReference type="EC" id="4.3.3.7" evidence="1"/>
<dbReference type="EMBL" id="CP000569">
    <property type="protein sequence ID" value="ABN73995.1"/>
    <property type="molecule type" value="Genomic_DNA"/>
</dbReference>
<dbReference type="SMR" id="A3N0Q9"/>
<dbReference type="STRING" id="416269.APL_0899"/>
<dbReference type="EnsemblBacteria" id="ABN73995">
    <property type="protein sequence ID" value="ABN73995"/>
    <property type="gene ID" value="APL_0899"/>
</dbReference>
<dbReference type="KEGG" id="apl:APL_0899"/>
<dbReference type="eggNOG" id="COG0329">
    <property type="taxonomic scope" value="Bacteria"/>
</dbReference>
<dbReference type="HOGENOM" id="CLU_049343_7_1_6"/>
<dbReference type="UniPathway" id="UPA00034">
    <property type="reaction ID" value="UER00017"/>
</dbReference>
<dbReference type="Proteomes" id="UP000001432">
    <property type="component" value="Chromosome"/>
</dbReference>
<dbReference type="GO" id="GO:0005829">
    <property type="term" value="C:cytosol"/>
    <property type="evidence" value="ECO:0007669"/>
    <property type="project" value="TreeGrafter"/>
</dbReference>
<dbReference type="GO" id="GO:0008840">
    <property type="term" value="F:4-hydroxy-tetrahydrodipicolinate synthase activity"/>
    <property type="evidence" value="ECO:0007669"/>
    <property type="project" value="UniProtKB-UniRule"/>
</dbReference>
<dbReference type="GO" id="GO:0019877">
    <property type="term" value="P:diaminopimelate biosynthetic process"/>
    <property type="evidence" value="ECO:0007669"/>
    <property type="project" value="UniProtKB-UniRule"/>
</dbReference>
<dbReference type="GO" id="GO:0009089">
    <property type="term" value="P:lysine biosynthetic process via diaminopimelate"/>
    <property type="evidence" value="ECO:0007669"/>
    <property type="project" value="UniProtKB-UniRule"/>
</dbReference>
<dbReference type="CDD" id="cd00950">
    <property type="entry name" value="DHDPS"/>
    <property type="match status" value="1"/>
</dbReference>
<dbReference type="Gene3D" id="3.20.20.70">
    <property type="entry name" value="Aldolase class I"/>
    <property type="match status" value="1"/>
</dbReference>
<dbReference type="HAMAP" id="MF_00418">
    <property type="entry name" value="DapA"/>
    <property type="match status" value="1"/>
</dbReference>
<dbReference type="InterPro" id="IPR013785">
    <property type="entry name" value="Aldolase_TIM"/>
</dbReference>
<dbReference type="InterPro" id="IPR005263">
    <property type="entry name" value="DapA"/>
</dbReference>
<dbReference type="InterPro" id="IPR002220">
    <property type="entry name" value="DapA-like"/>
</dbReference>
<dbReference type="InterPro" id="IPR020625">
    <property type="entry name" value="Schiff_base-form_aldolases_AS"/>
</dbReference>
<dbReference type="InterPro" id="IPR020624">
    <property type="entry name" value="Schiff_base-form_aldolases_CS"/>
</dbReference>
<dbReference type="NCBIfam" id="TIGR00674">
    <property type="entry name" value="dapA"/>
    <property type="match status" value="1"/>
</dbReference>
<dbReference type="PANTHER" id="PTHR12128:SF66">
    <property type="entry name" value="4-HYDROXY-2-OXOGLUTARATE ALDOLASE, MITOCHONDRIAL"/>
    <property type="match status" value="1"/>
</dbReference>
<dbReference type="PANTHER" id="PTHR12128">
    <property type="entry name" value="DIHYDRODIPICOLINATE SYNTHASE"/>
    <property type="match status" value="1"/>
</dbReference>
<dbReference type="Pfam" id="PF00701">
    <property type="entry name" value="DHDPS"/>
    <property type="match status" value="1"/>
</dbReference>
<dbReference type="PIRSF" id="PIRSF001365">
    <property type="entry name" value="DHDPS"/>
    <property type="match status" value="1"/>
</dbReference>
<dbReference type="PRINTS" id="PR00146">
    <property type="entry name" value="DHPICSNTHASE"/>
</dbReference>
<dbReference type="SMART" id="SM01130">
    <property type="entry name" value="DHDPS"/>
    <property type="match status" value="1"/>
</dbReference>
<dbReference type="SUPFAM" id="SSF51569">
    <property type="entry name" value="Aldolase"/>
    <property type="match status" value="1"/>
</dbReference>
<dbReference type="PROSITE" id="PS00665">
    <property type="entry name" value="DHDPS_1"/>
    <property type="match status" value="1"/>
</dbReference>
<dbReference type="PROSITE" id="PS00666">
    <property type="entry name" value="DHDPS_2"/>
    <property type="match status" value="1"/>
</dbReference>
<proteinExistence type="inferred from homology"/>
<gene>
    <name evidence="1" type="primary">dapA</name>
    <name type="ordered locus">APL_0899</name>
</gene>
<sequence>MATPLFHGSIVALVTPMTHGEVNYEELKKLVEYHVQAGTHGIVSVGTTGESTTLSIDENVKVIKKTVEFADGRIPIIAGTGSNATSEAIILTKLLTNSGVAGCLSVVPYYNKPTQEGMYLHYKAIAESTDLPQILYNVPSRTGSDLKPETIGRLAEIPNIVGVKEATGDLTRLPLIKKLAGEDFIFLSGDDATGLESMKLGGQGVISVTNNVAAADMAKMCELALAGKFDEAEAINQRLMALHHDLFIEANPIPVKWAAYKLGLISEPNLRLPLTTLSESAQPTVLAALQKAGLI</sequence>
<name>DAPA_ACTP2</name>